<keyword id="KW-0007">Acetylation</keyword>
<keyword id="KW-0328">Glycosyltransferase</keyword>
<keyword id="KW-0808">Transferase</keyword>
<evidence type="ECO:0000250" key="1">
    <source>
        <dbReference type="UniProtKB" id="P50389"/>
    </source>
</evidence>
<evidence type="ECO:0000255" key="2">
    <source>
        <dbReference type="HAMAP-Rule" id="MF_01627"/>
    </source>
</evidence>
<accession>C4ZT66</accession>
<comment type="function">
    <text evidence="2">Catalyzes the reversible phosphorolytic breakdown of the N-glycosidic bond in the beta-(deoxy)ribonucleoside molecules, with the formation of the corresponding free purine bases and pentose-1-phosphate.</text>
</comment>
<comment type="catalytic activity">
    <reaction evidence="2">
        <text>a purine D-ribonucleoside + phosphate = a purine nucleobase + alpha-D-ribose 1-phosphate</text>
        <dbReference type="Rhea" id="RHEA:19805"/>
        <dbReference type="ChEBI" id="CHEBI:26386"/>
        <dbReference type="ChEBI" id="CHEBI:43474"/>
        <dbReference type="ChEBI" id="CHEBI:57720"/>
        <dbReference type="ChEBI" id="CHEBI:142355"/>
        <dbReference type="EC" id="2.4.2.1"/>
    </reaction>
</comment>
<comment type="catalytic activity">
    <reaction evidence="2">
        <text>a purine 2'-deoxy-D-ribonucleoside + phosphate = a purine nucleobase + 2-deoxy-alpha-D-ribose 1-phosphate</text>
        <dbReference type="Rhea" id="RHEA:36431"/>
        <dbReference type="ChEBI" id="CHEBI:26386"/>
        <dbReference type="ChEBI" id="CHEBI:43474"/>
        <dbReference type="ChEBI" id="CHEBI:57259"/>
        <dbReference type="ChEBI" id="CHEBI:142361"/>
        <dbReference type="EC" id="2.4.2.1"/>
    </reaction>
</comment>
<comment type="subunit">
    <text evidence="2">Homohexamer; trimer of homodimers.</text>
</comment>
<comment type="similarity">
    <text evidence="2">Belongs to the PNP/UDP phosphorylase family.</text>
</comment>
<feature type="chain" id="PRO_1000215748" description="Purine nucleoside phosphorylase DeoD-type">
    <location>
        <begin position="1"/>
        <end position="239"/>
    </location>
</feature>
<feature type="active site" description="Proton donor" evidence="2">
    <location>
        <position position="205"/>
    </location>
</feature>
<feature type="binding site" evidence="1">
    <location>
        <position position="5"/>
    </location>
    <ligand>
        <name>a purine D-ribonucleoside</name>
        <dbReference type="ChEBI" id="CHEBI:142355"/>
        <note>ligand shared between dimeric partners</note>
    </ligand>
</feature>
<feature type="binding site" description="in other chain" evidence="1">
    <location>
        <position position="21"/>
    </location>
    <ligand>
        <name>phosphate</name>
        <dbReference type="ChEBI" id="CHEBI:43474"/>
        <note>ligand shared between dimeric partners</note>
    </ligand>
</feature>
<feature type="binding site" description="in other chain" evidence="1">
    <location>
        <position position="25"/>
    </location>
    <ligand>
        <name>phosphate</name>
        <dbReference type="ChEBI" id="CHEBI:43474"/>
        <note>ligand shared between dimeric partners</note>
    </ligand>
</feature>
<feature type="binding site" evidence="1">
    <location>
        <position position="44"/>
    </location>
    <ligand>
        <name>phosphate</name>
        <dbReference type="ChEBI" id="CHEBI:43474"/>
        <note>ligand shared between dimeric partners</note>
    </ligand>
</feature>
<feature type="binding site" description="in other chain" evidence="1">
    <location>
        <begin position="88"/>
        <end position="91"/>
    </location>
    <ligand>
        <name>phosphate</name>
        <dbReference type="ChEBI" id="CHEBI:43474"/>
        <note>ligand shared between dimeric partners</note>
    </ligand>
</feature>
<feature type="binding site" description="in other chain" evidence="1">
    <location>
        <begin position="180"/>
        <end position="182"/>
    </location>
    <ligand>
        <name>a purine D-ribonucleoside</name>
        <dbReference type="ChEBI" id="CHEBI:142355"/>
        <note>ligand shared between dimeric partners</note>
    </ligand>
</feature>
<feature type="binding site" description="in other chain" evidence="1">
    <location>
        <begin position="204"/>
        <end position="205"/>
    </location>
    <ligand>
        <name>a purine D-ribonucleoside</name>
        <dbReference type="ChEBI" id="CHEBI:142355"/>
        <note>ligand shared between dimeric partners</note>
    </ligand>
</feature>
<feature type="site" description="Important for catalytic activity" evidence="2">
    <location>
        <position position="218"/>
    </location>
</feature>
<feature type="modified residue" description="N6-acetyllysine" evidence="2">
    <location>
        <position position="27"/>
    </location>
</feature>
<sequence>MATPHINAEMGDFADVVLMPGDPLRAKYIAETFLEDAREVNNVRGMLGFTGTYKGRKISVMGHGMGIPSCSIYTKELITDFGVKKIIRVGSCGAVLPHVKLRDVVIGMGACTDSKVNRIRFKDHDFAAIADFDMVRNAVDAAKALGIDARVGNLFSADLFYSPDGEMFDVMEKYGILGVEMEAAGIYGVAAEFGAKALTICTVSDHIRTHEQTTAAERQTTFNDMIKIALESVLLGDKE</sequence>
<dbReference type="EC" id="2.4.2.1" evidence="2"/>
<dbReference type="EMBL" id="CP001396">
    <property type="protein sequence ID" value="ACR65334.1"/>
    <property type="molecule type" value="Genomic_DNA"/>
</dbReference>
<dbReference type="RefSeq" id="WP_000224877.1">
    <property type="nucleotide sequence ID" value="NC_012759.1"/>
</dbReference>
<dbReference type="SMR" id="C4ZT66"/>
<dbReference type="GeneID" id="93777460"/>
<dbReference type="KEGG" id="ebw:BWG_4076"/>
<dbReference type="HOGENOM" id="CLU_068457_2_0_6"/>
<dbReference type="GO" id="GO:0005829">
    <property type="term" value="C:cytosol"/>
    <property type="evidence" value="ECO:0007669"/>
    <property type="project" value="TreeGrafter"/>
</dbReference>
<dbReference type="GO" id="GO:0004731">
    <property type="term" value="F:purine-nucleoside phosphorylase activity"/>
    <property type="evidence" value="ECO:0007669"/>
    <property type="project" value="UniProtKB-UniRule"/>
</dbReference>
<dbReference type="GO" id="GO:0006152">
    <property type="term" value="P:purine nucleoside catabolic process"/>
    <property type="evidence" value="ECO:0007669"/>
    <property type="project" value="TreeGrafter"/>
</dbReference>
<dbReference type="CDD" id="cd09006">
    <property type="entry name" value="PNP_EcPNPI-like"/>
    <property type="match status" value="1"/>
</dbReference>
<dbReference type="FunFam" id="3.40.50.1580:FF:000002">
    <property type="entry name" value="Purine nucleoside phosphorylase DeoD-type"/>
    <property type="match status" value="1"/>
</dbReference>
<dbReference type="Gene3D" id="3.40.50.1580">
    <property type="entry name" value="Nucleoside phosphorylase domain"/>
    <property type="match status" value="1"/>
</dbReference>
<dbReference type="HAMAP" id="MF_01627">
    <property type="entry name" value="Pur_nucleosid_phosp"/>
    <property type="match status" value="1"/>
</dbReference>
<dbReference type="InterPro" id="IPR004402">
    <property type="entry name" value="DeoD-type"/>
</dbReference>
<dbReference type="InterPro" id="IPR018016">
    <property type="entry name" value="Nucleoside_phosphorylase_CS"/>
</dbReference>
<dbReference type="InterPro" id="IPR000845">
    <property type="entry name" value="Nucleoside_phosphorylase_d"/>
</dbReference>
<dbReference type="InterPro" id="IPR035994">
    <property type="entry name" value="Nucleoside_phosphorylase_sf"/>
</dbReference>
<dbReference type="NCBIfam" id="TIGR00107">
    <property type="entry name" value="deoD"/>
    <property type="match status" value="1"/>
</dbReference>
<dbReference type="NCBIfam" id="NF004489">
    <property type="entry name" value="PRK05819.1"/>
    <property type="match status" value="1"/>
</dbReference>
<dbReference type="NCBIfam" id="NF009914">
    <property type="entry name" value="PRK13374.1"/>
    <property type="match status" value="1"/>
</dbReference>
<dbReference type="PANTHER" id="PTHR43691:SF2">
    <property type="entry name" value="PURINE NUCLEOSIDE PHOSPHORYLASE DEOD-TYPE"/>
    <property type="match status" value="1"/>
</dbReference>
<dbReference type="PANTHER" id="PTHR43691">
    <property type="entry name" value="URIDINE PHOSPHORYLASE"/>
    <property type="match status" value="1"/>
</dbReference>
<dbReference type="Pfam" id="PF01048">
    <property type="entry name" value="PNP_UDP_1"/>
    <property type="match status" value="1"/>
</dbReference>
<dbReference type="SUPFAM" id="SSF53167">
    <property type="entry name" value="Purine and uridine phosphorylases"/>
    <property type="match status" value="1"/>
</dbReference>
<dbReference type="PROSITE" id="PS01232">
    <property type="entry name" value="PNP_UDP_1"/>
    <property type="match status" value="1"/>
</dbReference>
<protein>
    <recommendedName>
        <fullName evidence="2">Purine nucleoside phosphorylase DeoD-type</fullName>
        <shortName evidence="2">PNP</shortName>
        <ecNumber evidence="2">2.4.2.1</ecNumber>
    </recommendedName>
</protein>
<organism>
    <name type="scientific">Escherichia coli (strain K12 / MC4100 / BW2952)</name>
    <dbReference type="NCBI Taxonomy" id="595496"/>
    <lineage>
        <taxon>Bacteria</taxon>
        <taxon>Pseudomonadati</taxon>
        <taxon>Pseudomonadota</taxon>
        <taxon>Gammaproteobacteria</taxon>
        <taxon>Enterobacterales</taxon>
        <taxon>Enterobacteriaceae</taxon>
        <taxon>Escherichia</taxon>
    </lineage>
</organism>
<gene>
    <name evidence="2" type="primary">deoD</name>
    <name type="ordered locus">BWG_4076</name>
</gene>
<reference key="1">
    <citation type="journal article" date="2009" name="J. Bacteriol.">
        <title>Genomic sequencing reveals regulatory mutations and recombinational events in the widely used MC4100 lineage of Escherichia coli K-12.</title>
        <authorList>
            <person name="Ferenci T."/>
            <person name="Zhou Z."/>
            <person name="Betteridge T."/>
            <person name="Ren Y."/>
            <person name="Liu Y."/>
            <person name="Feng L."/>
            <person name="Reeves P.R."/>
            <person name="Wang L."/>
        </authorList>
    </citation>
    <scope>NUCLEOTIDE SEQUENCE [LARGE SCALE GENOMIC DNA]</scope>
    <source>
        <strain>K12 / MC4100 / BW2952</strain>
    </source>
</reference>
<proteinExistence type="inferred from homology"/>
<name>DEOD_ECOBW</name>